<reference key="1">
    <citation type="journal article" date="2009" name="Appl. Environ. Microbiol.">
        <title>Rhizobium sp. strain NGR234 possesses a remarkable number of secretion systems.</title>
        <authorList>
            <person name="Schmeisser C."/>
            <person name="Liesegang H."/>
            <person name="Krysciak D."/>
            <person name="Bakkou N."/>
            <person name="Le Quere A."/>
            <person name="Wollherr A."/>
            <person name="Heinemeyer I."/>
            <person name="Morgenstern B."/>
            <person name="Pommerening-Roeser A."/>
            <person name="Flores M."/>
            <person name="Palacios R."/>
            <person name="Brenner S."/>
            <person name="Gottschalk G."/>
            <person name="Schmitz R.A."/>
            <person name="Broughton W.J."/>
            <person name="Perret X."/>
            <person name="Strittmatter A.W."/>
            <person name="Streit W.R."/>
        </authorList>
    </citation>
    <scope>NUCLEOTIDE SEQUENCE [LARGE SCALE GENOMIC DNA]</scope>
    <source>
        <strain>NBRC 101917 / NGR234</strain>
    </source>
</reference>
<sequence>MPEVKSDIEIARAARKQPIMEIGAKLGIPPEHLLPYGHDKAKVSAEFIAAQKTNGNGRLILVTAINPTPAGEGKTTTTVGLGDGLNRIGKKTIVCIREASLGPCFGIKGGAAGGGYAQVVPMEDINLHFTGDFHAITSAHNLLAALIDNHIYWGNEQAIDIRRIAWRRVMDMNDRALRQIIGSLGGVANGYPRETGFDITVASEVMAILCLAADIRDLEKRLGNIIIGYRRDKSPVYARDIKADGAMAVLLKDAMQPNLVQTLENNPAFVHGGPFANIAHGCNSVVATTTALKLADYVVTEAGFGADLGAEKFFDIKCRKAGLKPDAAVVVATVRAIKMNGGVKKDDLGKENLEALRKGCANLGRHVQNVKKFGVPVLVAINHFTSDTEAEIQAIKDYVRTLGSEAVLCRHWAEGSAGIEELAHKVVDLANAGHSQFSPLYPDDMPLFHKIETIAKDIYHASEVIADKLVRDQLRTWEDQGYGHLPICMAKTQYSFSTDPNLRGAPSGHAVPIREVRLAAGAGFVVVITGEIMTMPGLPKVPSSEKIRLNEAGYIEGLF</sequence>
<gene>
    <name evidence="1" type="primary">fhs</name>
    <name type="ordered locus">NGR_c23560</name>
</gene>
<accession>C3MFQ8</accession>
<evidence type="ECO:0000255" key="1">
    <source>
        <dbReference type="HAMAP-Rule" id="MF_01543"/>
    </source>
</evidence>
<dbReference type="EC" id="6.3.4.3" evidence="1"/>
<dbReference type="EMBL" id="CP001389">
    <property type="protein sequence ID" value="ACP26115.1"/>
    <property type="molecule type" value="Genomic_DNA"/>
</dbReference>
<dbReference type="RefSeq" id="WP_012708873.1">
    <property type="nucleotide sequence ID" value="NC_012587.1"/>
</dbReference>
<dbReference type="RefSeq" id="YP_002826868.1">
    <property type="nucleotide sequence ID" value="NC_012587.1"/>
</dbReference>
<dbReference type="SMR" id="C3MFQ8"/>
<dbReference type="STRING" id="394.NGR_c23560"/>
<dbReference type="KEGG" id="rhi:NGR_c23560"/>
<dbReference type="PATRIC" id="fig|394.7.peg.5175"/>
<dbReference type="eggNOG" id="COG2759">
    <property type="taxonomic scope" value="Bacteria"/>
</dbReference>
<dbReference type="HOGENOM" id="CLU_003601_3_3_5"/>
<dbReference type="OrthoDB" id="9761733at2"/>
<dbReference type="UniPathway" id="UPA00193"/>
<dbReference type="Proteomes" id="UP000001054">
    <property type="component" value="Chromosome"/>
</dbReference>
<dbReference type="GO" id="GO:0005524">
    <property type="term" value="F:ATP binding"/>
    <property type="evidence" value="ECO:0007669"/>
    <property type="project" value="UniProtKB-UniRule"/>
</dbReference>
<dbReference type="GO" id="GO:0004329">
    <property type="term" value="F:formate-tetrahydrofolate ligase activity"/>
    <property type="evidence" value="ECO:0007669"/>
    <property type="project" value="UniProtKB-UniRule"/>
</dbReference>
<dbReference type="GO" id="GO:0035999">
    <property type="term" value="P:tetrahydrofolate interconversion"/>
    <property type="evidence" value="ECO:0007669"/>
    <property type="project" value="UniProtKB-UniRule"/>
</dbReference>
<dbReference type="CDD" id="cd00477">
    <property type="entry name" value="FTHFS"/>
    <property type="match status" value="1"/>
</dbReference>
<dbReference type="FunFam" id="3.30.1510.10:FF:000001">
    <property type="entry name" value="Formate--tetrahydrofolate ligase"/>
    <property type="match status" value="1"/>
</dbReference>
<dbReference type="FunFam" id="3.10.410.10:FF:000001">
    <property type="entry name" value="Putative formate--tetrahydrofolate ligase"/>
    <property type="match status" value="1"/>
</dbReference>
<dbReference type="Gene3D" id="3.30.1510.10">
    <property type="entry name" value="Domain 2, N(10)-formyltetrahydrofolate synthetase"/>
    <property type="match status" value="1"/>
</dbReference>
<dbReference type="Gene3D" id="3.10.410.10">
    <property type="entry name" value="Formyltetrahydrofolate synthetase, domain 3"/>
    <property type="match status" value="1"/>
</dbReference>
<dbReference type="Gene3D" id="3.40.50.300">
    <property type="entry name" value="P-loop containing nucleotide triphosphate hydrolases"/>
    <property type="match status" value="1"/>
</dbReference>
<dbReference type="HAMAP" id="MF_01543">
    <property type="entry name" value="FTHFS"/>
    <property type="match status" value="1"/>
</dbReference>
<dbReference type="InterPro" id="IPR000559">
    <property type="entry name" value="Formate_THF_ligase"/>
</dbReference>
<dbReference type="InterPro" id="IPR020628">
    <property type="entry name" value="Formate_THF_ligase_CS"/>
</dbReference>
<dbReference type="InterPro" id="IPR027417">
    <property type="entry name" value="P-loop_NTPase"/>
</dbReference>
<dbReference type="NCBIfam" id="NF010030">
    <property type="entry name" value="PRK13505.1"/>
    <property type="match status" value="1"/>
</dbReference>
<dbReference type="Pfam" id="PF01268">
    <property type="entry name" value="FTHFS"/>
    <property type="match status" value="1"/>
</dbReference>
<dbReference type="SUPFAM" id="SSF52540">
    <property type="entry name" value="P-loop containing nucleoside triphosphate hydrolases"/>
    <property type="match status" value="1"/>
</dbReference>
<dbReference type="PROSITE" id="PS00721">
    <property type="entry name" value="FTHFS_1"/>
    <property type="match status" value="1"/>
</dbReference>
<dbReference type="PROSITE" id="PS00722">
    <property type="entry name" value="FTHFS_2"/>
    <property type="match status" value="1"/>
</dbReference>
<protein>
    <recommendedName>
        <fullName evidence="1">Formate--tetrahydrofolate ligase</fullName>
        <ecNumber evidence="1">6.3.4.3</ecNumber>
    </recommendedName>
    <alternativeName>
        <fullName evidence="1">Formyltetrahydrofolate synthetase</fullName>
        <shortName evidence="1">FHS</shortName>
        <shortName evidence="1">FTHFS</shortName>
    </alternativeName>
</protein>
<feature type="chain" id="PRO_1000185260" description="Formate--tetrahydrofolate ligase">
    <location>
        <begin position="1"/>
        <end position="559"/>
    </location>
</feature>
<feature type="binding site" evidence="1">
    <location>
        <begin position="68"/>
        <end position="75"/>
    </location>
    <ligand>
        <name>ATP</name>
        <dbReference type="ChEBI" id="CHEBI:30616"/>
    </ligand>
</feature>
<name>FTHS_SINFN</name>
<proteinExistence type="inferred from homology"/>
<comment type="catalytic activity">
    <reaction evidence="1">
        <text>(6S)-5,6,7,8-tetrahydrofolate + formate + ATP = (6R)-10-formyltetrahydrofolate + ADP + phosphate</text>
        <dbReference type="Rhea" id="RHEA:20221"/>
        <dbReference type="ChEBI" id="CHEBI:15740"/>
        <dbReference type="ChEBI" id="CHEBI:30616"/>
        <dbReference type="ChEBI" id="CHEBI:43474"/>
        <dbReference type="ChEBI" id="CHEBI:57453"/>
        <dbReference type="ChEBI" id="CHEBI:195366"/>
        <dbReference type="ChEBI" id="CHEBI:456216"/>
        <dbReference type="EC" id="6.3.4.3"/>
    </reaction>
</comment>
<comment type="pathway">
    <text evidence="1">One-carbon metabolism; tetrahydrofolate interconversion.</text>
</comment>
<comment type="similarity">
    <text evidence="1">Belongs to the formate--tetrahydrofolate ligase family.</text>
</comment>
<keyword id="KW-0067">ATP-binding</keyword>
<keyword id="KW-0436">Ligase</keyword>
<keyword id="KW-0547">Nucleotide-binding</keyword>
<keyword id="KW-0554">One-carbon metabolism</keyword>
<keyword id="KW-1185">Reference proteome</keyword>
<organism>
    <name type="scientific">Sinorhizobium fredii (strain NBRC 101917 / NGR234)</name>
    <dbReference type="NCBI Taxonomy" id="394"/>
    <lineage>
        <taxon>Bacteria</taxon>
        <taxon>Pseudomonadati</taxon>
        <taxon>Pseudomonadota</taxon>
        <taxon>Alphaproteobacteria</taxon>
        <taxon>Hyphomicrobiales</taxon>
        <taxon>Rhizobiaceae</taxon>
        <taxon>Sinorhizobium/Ensifer group</taxon>
        <taxon>Sinorhizobium</taxon>
    </lineage>
</organism>